<proteinExistence type="evidence at protein level"/>
<evidence type="ECO:0000250" key="1"/>
<evidence type="ECO:0000255" key="2"/>
<evidence type="ECO:0000256" key="3">
    <source>
        <dbReference type="SAM" id="MobiDB-lite"/>
    </source>
</evidence>
<evidence type="ECO:0000269" key="4">
    <source>
    </source>
</evidence>
<evidence type="ECO:0000305" key="5"/>
<sequence>MNTVRVTFLLVFVLAVSLGQADKDENRMEMQEKTEQGKGYLDFAENLLPQKLEELEAKLLEEDSEESRNSRQKRCIGEGVPCDENDPRCCSGLVCLKPTLHGIWYKSYYCYKK</sequence>
<organism>
    <name type="scientific">Cyriopagopus hainanus</name>
    <name type="common">Chinese bird spider</name>
    <name type="synonym">Haplopelma hainanum</name>
    <dbReference type="NCBI Taxonomy" id="209901"/>
    <lineage>
        <taxon>Eukaryota</taxon>
        <taxon>Metazoa</taxon>
        <taxon>Ecdysozoa</taxon>
        <taxon>Arthropoda</taxon>
        <taxon>Chelicerata</taxon>
        <taxon>Arachnida</taxon>
        <taxon>Araneae</taxon>
        <taxon>Mygalomorphae</taxon>
        <taxon>Theraphosidae</taxon>
        <taxon>Haplopelma</taxon>
    </lineage>
</organism>
<reference key="1">
    <citation type="journal article" date="2010" name="J. Proteome Res.">
        <title>Molecular diversification of peptide toxins from the tarantula Haplopelma hainanum (Ornithoctonus hainana) venom based on transcriptomic, peptidomic, and genomic analyses.</title>
        <authorList>
            <person name="Tang X."/>
            <person name="Zhang Y."/>
            <person name="Hu W."/>
            <person name="Xu D."/>
            <person name="Tao H."/>
            <person name="Yang X."/>
            <person name="Li Y."/>
            <person name="Jiang L."/>
            <person name="Liang S."/>
        </authorList>
    </citation>
    <scope>NUCLEOTIDE SEQUENCE [LARGE SCALE MRNA]</scope>
    <scope>PROTEIN SEQUENCE OF 75-113</scope>
    <scope>IDENTIFICATION BY MASS SPECTROMETRY</scope>
    <source>
        <tissue>Venom</tissue>
        <tissue>Venom gland</tissue>
    </source>
</reference>
<accession>D2Y256</accession>
<feature type="signal peptide" evidence="2">
    <location>
        <begin position="1"/>
        <end position="21"/>
    </location>
</feature>
<feature type="propeptide" id="PRO_0000400863" evidence="4">
    <location>
        <begin position="22"/>
        <end position="74"/>
    </location>
</feature>
<feature type="peptide" id="PRO_0000400864" description="U11-theraphotoxin-Hhn1a">
    <location>
        <begin position="75"/>
        <end position="113"/>
    </location>
</feature>
<feature type="region of interest" description="Disordered" evidence="3">
    <location>
        <begin position="59"/>
        <end position="83"/>
    </location>
</feature>
<feature type="compositionally biased region" description="Basic and acidic residues" evidence="3">
    <location>
        <begin position="59"/>
        <end position="69"/>
    </location>
</feature>
<feature type="disulfide bond" evidence="1">
    <location>
        <begin position="75"/>
        <end position="90"/>
    </location>
</feature>
<feature type="disulfide bond" evidence="1">
    <location>
        <begin position="82"/>
        <end position="95"/>
    </location>
</feature>
<feature type="disulfide bond" evidence="1">
    <location>
        <begin position="89"/>
        <end position="110"/>
    </location>
</feature>
<name>H16A4_CYRHA</name>
<dbReference type="EMBL" id="GU292933">
    <property type="protein sequence ID" value="ADB56749.1"/>
    <property type="molecule type" value="mRNA"/>
</dbReference>
<dbReference type="SMR" id="D2Y256"/>
<dbReference type="ArachnoServer" id="AS001592">
    <property type="toxin name" value="U11-theraphotoxin-Hhn1a"/>
</dbReference>
<dbReference type="GO" id="GO:0005576">
    <property type="term" value="C:extracellular region"/>
    <property type="evidence" value="ECO:0007669"/>
    <property type="project" value="UniProtKB-SubCell"/>
</dbReference>
<dbReference type="GO" id="GO:0019871">
    <property type="term" value="F:sodium channel inhibitor activity"/>
    <property type="evidence" value="ECO:0007669"/>
    <property type="project" value="InterPro"/>
</dbReference>
<dbReference type="GO" id="GO:0090729">
    <property type="term" value="F:toxin activity"/>
    <property type="evidence" value="ECO:0007669"/>
    <property type="project" value="UniProtKB-KW"/>
</dbReference>
<dbReference type="InterPro" id="IPR012627">
    <property type="entry name" value="Toxin_22"/>
</dbReference>
<dbReference type="Pfam" id="PF08092">
    <property type="entry name" value="Toxin_22"/>
    <property type="match status" value="1"/>
</dbReference>
<comment type="function">
    <text evidence="1">Probable ion channel inhibitor.</text>
</comment>
<comment type="subcellular location">
    <subcellularLocation>
        <location>Secreted</location>
    </subcellularLocation>
</comment>
<comment type="tissue specificity">
    <text>Expressed by the venom gland.</text>
</comment>
<comment type="domain">
    <text evidence="1">The presence of a 'disulfide through disulfide knot' structurally defines this protein as a knottin.</text>
</comment>
<comment type="similarity">
    <text evidence="5">Belongs to the neurotoxin 14 (magi-1) family. 01 (HNTX-16) subfamily.</text>
</comment>
<protein>
    <recommendedName>
        <fullName>U11-theraphotoxin-Hhn1a</fullName>
        <shortName>U11-TRTX-Hhn1a</shortName>
    </recommendedName>
    <alternativeName>
        <fullName>Hainantoxin-XVI.4</fullName>
        <shortName>HNTX-XVI.4</shortName>
    </alternativeName>
    <alternativeName>
        <fullName>Peptide F4-19.87</fullName>
    </alternativeName>
</protein>
<keyword id="KW-0903">Direct protein sequencing</keyword>
<keyword id="KW-1015">Disulfide bond</keyword>
<keyword id="KW-0872">Ion channel impairing toxin</keyword>
<keyword id="KW-0960">Knottin</keyword>
<keyword id="KW-0964">Secreted</keyword>
<keyword id="KW-0732">Signal</keyword>
<keyword id="KW-0800">Toxin</keyword>